<proteinExistence type="inferred from homology"/>
<protein>
    <recommendedName>
        <fullName evidence="1">Dihydroorotate dehydrogenase (quinone)</fullName>
        <ecNumber evidence="1">1.3.5.2</ecNumber>
    </recommendedName>
    <alternativeName>
        <fullName evidence="1">DHOdehase</fullName>
        <shortName evidence="1">DHOD</shortName>
        <shortName evidence="1">DHODase</shortName>
    </alternativeName>
    <alternativeName>
        <fullName evidence="1">Dihydroorotate oxidase</fullName>
    </alternativeName>
</protein>
<keyword id="KW-1003">Cell membrane</keyword>
<keyword id="KW-0285">Flavoprotein</keyword>
<keyword id="KW-0288">FMN</keyword>
<keyword id="KW-0472">Membrane</keyword>
<keyword id="KW-0560">Oxidoreductase</keyword>
<keyword id="KW-0665">Pyrimidine biosynthesis</keyword>
<keyword id="KW-1185">Reference proteome</keyword>
<organism>
    <name type="scientific">Streptomyces coelicolor (strain ATCC BAA-471 / A3(2) / M145)</name>
    <dbReference type="NCBI Taxonomy" id="100226"/>
    <lineage>
        <taxon>Bacteria</taxon>
        <taxon>Bacillati</taxon>
        <taxon>Actinomycetota</taxon>
        <taxon>Actinomycetes</taxon>
        <taxon>Kitasatosporales</taxon>
        <taxon>Streptomycetaceae</taxon>
        <taxon>Streptomyces</taxon>
        <taxon>Streptomyces albidoflavus group</taxon>
    </lineage>
</organism>
<comment type="function">
    <text evidence="1">Catalyzes the conversion of dihydroorotate to orotate with quinone as electron acceptor.</text>
</comment>
<comment type="catalytic activity">
    <reaction evidence="1">
        <text>(S)-dihydroorotate + a quinone = orotate + a quinol</text>
        <dbReference type="Rhea" id="RHEA:30187"/>
        <dbReference type="ChEBI" id="CHEBI:24646"/>
        <dbReference type="ChEBI" id="CHEBI:30839"/>
        <dbReference type="ChEBI" id="CHEBI:30864"/>
        <dbReference type="ChEBI" id="CHEBI:132124"/>
        <dbReference type="EC" id="1.3.5.2"/>
    </reaction>
</comment>
<comment type="cofactor">
    <cofactor evidence="1">
        <name>FMN</name>
        <dbReference type="ChEBI" id="CHEBI:58210"/>
    </cofactor>
    <text evidence="1">Binds 1 FMN per subunit.</text>
</comment>
<comment type="pathway">
    <text evidence="1">Pyrimidine metabolism; UMP biosynthesis via de novo pathway; orotate from (S)-dihydroorotate (quinone route): step 1/1.</text>
</comment>
<comment type="subunit">
    <text evidence="1">Monomer.</text>
</comment>
<comment type="subcellular location">
    <subcellularLocation>
        <location evidence="1">Cell membrane</location>
        <topology evidence="1">Peripheral membrane protein</topology>
    </subcellularLocation>
</comment>
<comment type="similarity">
    <text evidence="1">Belongs to the dihydroorotate dehydrogenase family. Type 2 subfamily.</text>
</comment>
<dbReference type="EC" id="1.3.5.2" evidence="1"/>
<dbReference type="EMBL" id="AL939109">
    <property type="protein sequence ID" value="CAB93362.1"/>
    <property type="molecule type" value="Genomic_DNA"/>
</dbReference>
<dbReference type="RefSeq" id="NP_625762.1">
    <property type="nucleotide sequence ID" value="NC_003888.3"/>
</dbReference>
<dbReference type="RefSeq" id="WP_003977344.1">
    <property type="nucleotide sequence ID" value="NZ_VNID01000021.1"/>
</dbReference>
<dbReference type="SMR" id="Q9KXR7"/>
<dbReference type="FunCoup" id="Q9KXR7">
    <property type="interactions" value="391"/>
</dbReference>
<dbReference type="STRING" id="100226.gene:17759068"/>
<dbReference type="PaxDb" id="100226-SCO1482"/>
<dbReference type="KEGG" id="sco:SCO1482"/>
<dbReference type="PATRIC" id="fig|100226.15.peg.1491"/>
<dbReference type="eggNOG" id="COG0167">
    <property type="taxonomic scope" value="Bacteria"/>
</dbReference>
<dbReference type="HOGENOM" id="CLU_013640_2_0_11"/>
<dbReference type="InParanoid" id="Q9KXR7"/>
<dbReference type="OrthoDB" id="9802377at2"/>
<dbReference type="PhylomeDB" id="Q9KXR7"/>
<dbReference type="UniPathway" id="UPA00070">
    <property type="reaction ID" value="UER00946"/>
</dbReference>
<dbReference type="Proteomes" id="UP000001973">
    <property type="component" value="Chromosome"/>
</dbReference>
<dbReference type="GO" id="GO:0005737">
    <property type="term" value="C:cytoplasm"/>
    <property type="evidence" value="ECO:0007669"/>
    <property type="project" value="InterPro"/>
</dbReference>
<dbReference type="GO" id="GO:0005886">
    <property type="term" value="C:plasma membrane"/>
    <property type="evidence" value="ECO:0007669"/>
    <property type="project" value="UniProtKB-SubCell"/>
</dbReference>
<dbReference type="GO" id="GO:0106430">
    <property type="term" value="F:dihydroorotate dehydrogenase (quinone) activity"/>
    <property type="evidence" value="ECO:0007669"/>
    <property type="project" value="UniProtKB-EC"/>
</dbReference>
<dbReference type="GO" id="GO:0004152">
    <property type="term" value="F:dihydroorotate dehydrogenase activity"/>
    <property type="evidence" value="ECO:0000318"/>
    <property type="project" value="GO_Central"/>
</dbReference>
<dbReference type="GO" id="GO:0006207">
    <property type="term" value="P:'de novo' pyrimidine nucleobase biosynthetic process"/>
    <property type="evidence" value="ECO:0000318"/>
    <property type="project" value="GO_Central"/>
</dbReference>
<dbReference type="GO" id="GO:0044205">
    <property type="term" value="P:'de novo' UMP biosynthetic process"/>
    <property type="evidence" value="ECO:0007669"/>
    <property type="project" value="UniProtKB-UniRule"/>
</dbReference>
<dbReference type="GO" id="GO:0009220">
    <property type="term" value="P:pyrimidine ribonucleotide biosynthetic process"/>
    <property type="evidence" value="ECO:0000318"/>
    <property type="project" value="GO_Central"/>
</dbReference>
<dbReference type="CDD" id="cd04738">
    <property type="entry name" value="DHOD_2_like"/>
    <property type="match status" value="1"/>
</dbReference>
<dbReference type="FunFam" id="3.20.20.70:FF:000123">
    <property type="entry name" value="Dihydroorotate dehydrogenase (quinone)"/>
    <property type="match status" value="1"/>
</dbReference>
<dbReference type="Gene3D" id="3.20.20.70">
    <property type="entry name" value="Aldolase class I"/>
    <property type="match status" value="1"/>
</dbReference>
<dbReference type="HAMAP" id="MF_00225">
    <property type="entry name" value="DHO_dh_type2"/>
    <property type="match status" value="1"/>
</dbReference>
<dbReference type="InterPro" id="IPR013785">
    <property type="entry name" value="Aldolase_TIM"/>
</dbReference>
<dbReference type="InterPro" id="IPR050074">
    <property type="entry name" value="DHO_dehydrogenase"/>
</dbReference>
<dbReference type="InterPro" id="IPR005719">
    <property type="entry name" value="Dihydroorotate_DH_2"/>
</dbReference>
<dbReference type="InterPro" id="IPR005720">
    <property type="entry name" value="Dihydroorotate_DH_cat"/>
</dbReference>
<dbReference type="InterPro" id="IPR001295">
    <property type="entry name" value="Dihydroorotate_DH_CS"/>
</dbReference>
<dbReference type="NCBIfam" id="NF003645">
    <property type="entry name" value="PRK05286.1-2"/>
    <property type="match status" value="1"/>
</dbReference>
<dbReference type="NCBIfam" id="NF003648">
    <property type="entry name" value="PRK05286.2-1"/>
    <property type="match status" value="1"/>
</dbReference>
<dbReference type="NCBIfam" id="NF003652">
    <property type="entry name" value="PRK05286.2-5"/>
    <property type="match status" value="1"/>
</dbReference>
<dbReference type="NCBIfam" id="TIGR01036">
    <property type="entry name" value="pyrD_sub2"/>
    <property type="match status" value="1"/>
</dbReference>
<dbReference type="PANTHER" id="PTHR48109:SF4">
    <property type="entry name" value="DIHYDROOROTATE DEHYDROGENASE (QUINONE), MITOCHONDRIAL"/>
    <property type="match status" value="1"/>
</dbReference>
<dbReference type="PANTHER" id="PTHR48109">
    <property type="entry name" value="DIHYDROOROTATE DEHYDROGENASE (QUINONE), MITOCHONDRIAL-RELATED"/>
    <property type="match status" value="1"/>
</dbReference>
<dbReference type="Pfam" id="PF01180">
    <property type="entry name" value="DHO_dh"/>
    <property type="match status" value="1"/>
</dbReference>
<dbReference type="SUPFAM" id="SSF51395">
    <property type="entry name" value="FMN-linked oxidoreductases"/>
    <property type="match status" value="1"/>
</dbReference>
<dbReference type="PROSITE" id="PS00912">
    <property type="entry name" value="DHODEHASE_2"/>
    <property type="match status" value="1"/>
</dbReference>
<accession>Q9KXR7</accession>
<feature type="chain" id="PRO_0000148477" description="Dihydroorotate dehydrogenase (quinone)">
    <location>
        <begin position="1"/>
        <end position="368"/>
    </location>
</feature>
<feature type="active site" description="Nucleophile" evidence="1">
    <location>
        <position position="182"/>
    </location>
</feature>
<feature type="binding site" evidence="1">
    <location>
        <begin position="67"/>
        <end position="71"/>
    </location>
    <ligand>
        <name>FMN</name>
        <dbReference type="ChEBI" id="CHEBI:58210"/>
    </ligand>
</feature>
<feature type="binding site" evidence="1">
    <location>
        <position position="71"/>
    </location>
    <ligand>
        <name>substrate</name>
    </ligand>
</feature>
<feature type="binding site" evidence="1">
    <location>
        <position position="91"/>
    </location>
    <ligand>
        <name>FMN</name>
        <dbReference type="ChEBI" id="CHEBI:58210"/>
    </ligand>
</feature>
<feature type="binding site" evidence="1">
    <location>
        <begin position="116"/>
        <end position="120"/>
    </location>
    <ligand>
        <name>substrate</name>
    </ligand>
</feature>
<feature type="binding site" evidence="1">
    <location>
        <position position="146"/>
    </location>
    <ligand>
        <name>FMN</name>
        <dbReference type="ChEBI" id="CHEBI:58210"/>
    </ligand>
</feature>
<feature type="binding site" evidence="1">
    <location>
        <position position="179"/>
    </location>
    <ligand>
        <name>FMN</name>
        <dbReference type="ChEBI" id="CHEBI:58210"/>
    </ligand>
</feature>
<feature type="binding site" evidence="1">
    <location>
        <position position="179"/>
    </location>
    <ligand>
        <name>substrate</name>
    </ligand>
</feature>
<feature type="binding site" evidence="1">
    <location>
        <position position="184"/>
    </location>
    <ligand>
        <name>substrate</name>
    </ligand>
</feature>
<feature type="binding site" evidence="1">
    <location>
        <position position="222"/>
    </location>
    <ligand>
        <name>FMN</name>
        <dbReference type="ChEBI" id="CHEBI:58210"/>
    </ligand>
</feature>
<feature type="binding site" evidence="1">
    <location>
        <position position="250"/>
    </location>
    <ligand>
        <name>FMN</name>
        <dbReference type="ChEBI" id="CHEBI:58210"/>
    </ligand>
</feature>
<feature type="binding site" evidence="1">
    <location>
        <begin position="251"/>
        <end position="252"/>
    </location>
    <ligand>
        <name>substrate</name>
    </ligand>
</feature>
<feature type="binding site" evidence="1">
    <location>
        <position position="276"/>
    </location>
    <ligand>
        <name>FMN</name>
        <dbReference type="ChEBI" id="CHEBI:58210"/>
    </ligand>
</feature>
<feature type="binding site" evidence="1">
    <location>
        <position position="305"/>
    </location>
    <ligand>
        <name>FMN</name>
        <dbReference type="ChEBI" id="CHEBI:58210"/>
    </ligand>
</feature>
<feature type="binding site" evidence="1">
    <location>
        <begin position="326"/>
        <end position="327"/>
    </location>
    <ligand>
        <name>FMN</name>
        <dbReference type="ChEBI" id="CHEBI:58210"/>
    </ligand>
</feature>
<evidence type="ECO:0000255" key="1">
    <source>
        <dbReference type="HAMAP-Rule" id="MF_00225"/>
    </source>
</evidence>
<sequence>MYKTFFKLVFSRMDPERAHHLAFRWIRLAVRVPVLRTFVAAALAPRHKELRTEALGLRMHGPFGLAAGFDKNAVAIDGMAMLGFDHVEIGTVTGEPQPGNPKKRLFRLVADRALINRMGFNNDGSLAVAARLASRTPVFRTVVGVNIGKTKVVPEEEAVGDYVKSAERLAPHADYLVVNVSSPNTPGLRNLQATEALRPLLSAVREAADRAVTARRVPLLVKIAPDLADEDVDAVADLAVELGLDGIIATNTTIAREGLGLTSSPALVGETGGLSGAPLKARSLEVLRRLYARVGDRITLVGVGGVETAEDAWERILAGATLVQGYSAFIYEGPFWGRAMHKGLAARLRQSPYATLADAVGADVRKHS</sequence>
<gene>
    <name evidence="1" type="primary">pyrD</name>
    <name type="ordered locus">SCO1482</name>
    <name type="ORF">SC9C5.06c</name>
</gene>
<name>PYRD_STRCO</name>
<reference key="1">
    <citation type="journal article" date="2002" name="Nature">
        <title>Complete genome sequence of the model actinomycete Streptomyces coelicolor A3(2).</title>
        <authorList>
            <person name="Bentley S.D."/>
            <person name="Chater K.F."/>
            <person name="Cerdeno-Tarraga A.-M."/>
            <person name="Challis G.L."/>
            <person name="Thomson N.R."/>
            <person name="James K.D."/>
            <person name="Harris D.E."/>
            <person name="Quail M.A."/>
            <person name="Kieser H."/>
            <person name="Harper D."/>
            <person name="Bateman A."/>
            <person name="Brown S."/>
            <person name="Chandra G."/>
            <person name="Chen C.W."/>
            <person name="Collins M."/>
            <person name="Cronin A."/>
            <person name="Fraser A."/>
            <person name="Goble A."/>
            <person name="Hidalgo J."/>
            <person name="Hornsby T."/>
            <person name="Howarth S."/>
            <person name="Huang C.-H."/>
            <person name="Kieser T."/>
            <person name="Larke L."/>
            <person name="Murphy L.D."/>
            <person name="Oliver K."/>
            <person name="O'Neil S."/>
            <person name="Rabbinowitsch E."/>
            <person name="Rajandream M.A."/>
            <person name="Rutherford K.M."/>
            <person name="Rutter S."/>
            <person name="Seeger K."/>
            <person name="Saunders D."/>
            <person name="Sharp S."/>
            <person name="Squares R."/>
            <person name="Squares S."/>
            <person name="Taylor K."/>
            <person name="Warren T."/>
            <person name="Wietzorrek A."/>
            <person name="Woodward J.R."/>
            <person name="Barrell B.G."/>
            <person name="Parkhill J."/>
            <person name="Hopwood D.A."/>
        </authorList>
    </citation>
    <scope>NUCLEOTIDE SEQUENCE [LARGE SCALE GENOMIC DNA]</scope>
    <source>
        <strain>ATCC BAA-471 / A3(2) / M145</strain>
    </source>
</reference>